<organism>
    <name type="scientific">Rhodospirillum centenum (strain ATCC 51521 / SW)</name>
    <dbReference type="NCBI Taxonomy" id="414684"/>
    <lineage>
        <taxon>Bacteria</taxon>
        <taxon>Pseudomonadati</taxon>
        <taxon>Pseudomonadota</taxon>
        <taxon>Alphaproteobacteria</taxon>
        <taxon>Rhodospirillales</taxon>
        <taxon>Rhodospirillaceae</taxon>
        <taxon>Rhodospirillum</taxon>
    </lineage>
</organism>
<dbReference type="EMBL" id="CP000613">
    <property type="protein sequence ID" value="ACI98142.1"/>
    <property type="molecule type" value="Genomic_DNA"/>
</dbReference>
<dbReference type="RefSeq" id="WP_012565933.1">
    <property type="nucleotide sequence ID" value="NC_011420.2"/>
</dbReference>
<dbReference type="SMR" id="B6IRQ6"/>
<dbReference type="STRING" id="414684.RC1_0711"/>
<dbReference type="KEGG" id="rce:RC1_0711"/>
<dbReference type="eggNOG" id="COG0087">
    <property type="taxonomic scope" value="Bacteria"/>
</dbReference>
<dbReference type="HOGENOM" id="CLU_044142_2_0_5"/>
<dbReference type="OrthoDB" id="9806135at2"/>
<dbReference type="Proteomes" id="UP000001591">
    <property type="component" value="Chromosome"/>
</dbReference>
<dbReference type="GO" id="GO:0022625">
    <property type="term" value="C:cytosolic large ribosomal subunit"/>
    <property type="evidence" value="ECO:0007669"/>
    <property type="project" value="TreeGrafter"/>
</dbReference>
<dbReference type="GO" id="GO:0019843">
    <property type="term" value="F:rRNA binding"/>
    <property type="evidence" value="ECO:0007669"/>
    <property type="project" value="UniProtKB-UniRule"/>
</dbReference>
<dbReference type="GO" id="GO:0003735">
    <property type="term" value="F:structural constituent of ribosome"/>
    <property type="evidence" value="ECO:0007669"/>
    <property type="project" value="InterPro"/>
</dbReference>
<dbReference type="GO" id="GO:0006412">
    <property type="term" value="P:translation"/>
    <property type="evidence" value="ECO:0007669"/>
    <property type="project" value="UniProtKB-UniRule"/>
</dbReference>
<dbReference type="FunFam" id="2.40.30.10:FF:000004">
    <property type="entry name" value="50S ribosomal protein L3"/>
    <property type="match status" value="1"/>
</dbReference>
<dbReference type="FunFam" id="3.30.160.810:FF:000001">
    <property type="entry name" value="50S ribosomal protein L3"/>
    <property type="match status" value="1"/>
</dbReference>
<dbReference type="Gene3D" id="3.30.160.810">
    <property type="match status" value="1"/>
</dbReference>
<dbReference type="Gene3D" id="2.40.30.10">
    <property type="entry name" value="Translation factors"/>
    <property type="match status" value="1"/>
</dbReference>
<dbReference type="HAMAP" id="MF_01325_B">
    <property type="entry name" value="Ribosomal_uL3_B"/>
    <property type="match status" value="1"/>
</dbReference>
<dbReference type="InterPro" id="IPR000597">
    <property type="entry name" value="Ribosomal_uL3"/>
</dbReference>
<dbReference type="InterPro" id="IPR019927">
    <property type="entry name" value="Ribosomal_uL3_bac/org-type"/>
</dbReference>
<dbReference type="InterPro" id="IPR019926">
    <property type="entry name" value="Ribosomal_uL3_CS"/>
</dbReference>
<dbReference type="InterPro" id="IPR009000">
    <property type="entry name" value="Transl_B-barrel_sf"/>
</dbReference>
<dbReference type="NCBIfam" id="TIGR03625">
    <property type="entry name" value="L3_bact"/>
    <property type="match status" value="1"/>
</dbReference>
<dbReference type="PANTHER" id="PTHR11229">
    <property type="entry name" value="50S RIBOSOMAL PROTEIN L3"/>
    <property type="match status" value="1"/>
</dbReference>
<dbReference type="PANTHER" id="PTHR11229:SF16">
    <property type="entry name" value="LARGE RIBOSOMAL SUBUNIT PROTEIN UL3C"/>
    <property type="match status" value="1"/>
</dbReference>
<dbReference type="Pfam" id="PF00297">
    <property type="entry name" value="Ribosomal_L3"/>
    <property type="match status" value="1"/>
</dbReference>
<dbReference type="SUPFAM" id="SSF50447">
    <property type="entry name" value="Translation proteins"/>
    <property type="match status" value="1"/>
</dbReference>
<dbReference type="PROSITE" id="PS00474">
    <property type="entry name" value="RIBOSOMAL_L3"/>
    <property type="match status" value="1"/>
</dbReference>
<protein>
    <recommendedName>
        <fullName evidence="1">Large ribosomal subunit protein uL3</fullName>
    </recommendedName>
    <alternativeName>
        <fullName evidence="3">50S ribosomal protein L3</fullName>
    </alternativeName>
</protein>
<sequence>MRSGLIAQKLGMTRVFTDEGEHVPVTVLKLDQVQVVAQRTEDRDGYTALQLGAGKAKVKNVAKAQREQFARAKVEPKKKLVEFRVTPDALIEVGAEITADHFVPGQFVDVTGTTIGRGFTGPMRRWNFGGLRATHGVSVSHRSHGSTGGRQDPGKTFKNKKMAGHYGVEKVTVQNLKVVQVDVERGLILVKGAIPGHEGGWVLIRDAVKKKLPDGAPFPGAIRAPAADTPAAQEG</sequence>
<comment type="function">
    <text evidence="1">One of the primary rRNA binding proteins, it binds directly near the 3'-end of the 23S rRNA, where it nucleates assembly of the 50S subunit.</text>
</comment>
<comment type="subunit">
    <text evidence="1">Part of the 50S ribosomal subunit. Forms a cluster with proteins L14 and L19.</text>
</comment>
<comment type="PTM">
    <text evidence="1">Methylated by PrmB.</text>
</comment>
<comment type="similarity">
    <text evidence="1">Belongs to the universal ribosomal protein uL3 family.</text>
</comment>
<keyword id="KW-0488">Methylation</keyword>
<keyword id="KW-1185">Reference proteome</keyword>
<keyword id="KW-0687">Ribonucleoprotein</keyword>
<keyword id="KW-0689">Ribosomal protein</keyword>
<keyword id="KW-0694">RNA-binding</keyword>
<keyword id="KW-0699">rRNA-binding</keyword>
<accession>B6IRQ6</accession>
<feature type="chain" id="PRO_1000141909" description="Large ribosomal subunit protein uL3">
    <location>
        <begin position="1"/>
        <end position="235"/>
    </location>
</feature>
<feature type="region of interest" description="Disordered" evidence="2">
    <location>
        <begin position="138"/>
        <end position="157"/>
    </location>
</feature>
<feature type="modified residue" description="N5-methylglutamine" evidence="1">
    <location>
        <position position="151"/>
    </location>
</feature>
<gene>
    <name evidence="1" type="primary">rplC</name>
    <name type="ordered locus">RC1_0711</name>
</gene>
<reference key="1">
    <citation type="submission" date="2007-03" db="EMBL/GenBank/DDBJ databases">
        <title>Genome sequence of Rhodospirillum centenum.</title>
        <authorList>
            <person name="Touchman J.W."/>
            <person name="Bauer C."/>
            <person name="Blankenship R.E."/>
        </authorList>
    </citation>
    <scope>NUCLEOTIDE SEQUENCE [LARGE SCALE GENOMIC DNA]</scope>
    <source>
        <strain>ATCC 51521 / SW</strain>
    </source>
</reference>
<evidence type="ECO:0000255" key="1">
    <source>
        <dbReference type="HAMAP-Rule" id="MF_01325"/>
    </source>
</evidence>
<evidence type="ECO:0000256" key="2">
    <source>
        <dbReference type="SAM" id="MobiDB-lite"/>
    </source>
</evidence>
<evidence type="ECO:0000305" key="3"/>
<proteinExistence type="inferred from homology"/>
<name>RL3_RHOCS</name>